<name>SYR_LIMRJ</name>
<sequence>MSDKQQVAAALAQALPEMDVKEIEAKIERPKDSSNGDYAFPTFFLAKTLHKAPQMIASELVEKVDQNGFEKVVVAGPYINFFLDKAQVGAKILQTILADPEHYGEIDLGHQSNVTIDYSSPNIAKPMGMGHLRSTMIGEAVARILEKVNYNLIRIDYLGDWGTQFGKLMAAYEMWGDEAEVKKDPINTLLKYYVRINNEADEHPEYTEAGRNWFAKLEHGDEEAWRLWHWFREVSLERFQRVYKMLDVNFDSFNGEAFSAQKMEEPIQLLRDKDLLKPSRGAEIVDLDEYNLPPLLIIKSNGTTTYITRDLATALFRKRMYGHAKSLYVVGAEQETYFKQLRAALKEMGFNWWDQIEHISFGLMNLNGKKMSTRKGNVVSLEDVLNDSIDLARKQIAEKNPDLENADEVAKEVGVGAVIFHDLKNYRRNAVNFKLEDVVKFEGETGPYVQYARARAESILRKGGIRDFSDVDLTKAGAEAWELISFLGQYSEAIKRAALNYDPSVIAKYALELAKKFNQYYAHTRILDKDEAQPARLALTQAVSDVLKSALDLLDIKAPDEM</sequence>
<organism>
    <name type="scientific">Limosilactobacillus reuteri subsp. reuteri (strain JCM 1112)</name>
    <name type="common">Lactobacillus reuteri</name>
    <dbReference type="NCBI Taxonomy" id="557433"/>
    <lineage>
        <taxon>Bacteria</taxon>
        <taxon>Bacillati</taxon>
        <taxon>Bacillota</taxon>
        <taxon>Bacilli</taxon>
        <taxon>Lactobacillales</taxon>
        <taxon>Lactobacillaceae</taxon>
        <taxon>Limosilactobacillus</taxon>
    </lineage>
</organism>
<accession>B2G8D8</accession>
<gene>
    <name evidence="1" type="primary">argS</name>
    <name type="ordered locus">LAR_1204</name>
</gene>
<dbReference type="EC" id="6.1.1.19" evidence="1"/>
<dbReference type="EMBL" id="AP007281">
    <property type="protein sequence ID" value="BAG25720.1"/>
    <property type="molecule type" value="Genomic_DNA"/>
</dbReference>
<dbReference type="RefSeq" id="WP_003668521.1">
    <property type="nucleotide sequence ID" value="NC_010609.1"/>
</dbReference>
<dbReference type="SMR" id="B2G8D8"/>
<dbReference type="GeneID" id="77191938"/>
<dbReference type="KEGG" id="lrf:LAR_1204"/>
<dbReference type="HOGENOM" id="CLU_006406_6_1_9"/>
<dbReference type="GO" id="GO:0005737">
    <property type="term" value="C:cytoplasm"/>
    <property type="evidence" value="ECO:0007669"/>
    <property type="project" value="UniProtKB-SubCell"/>
</dbReference>
<dbReference type="GO" id="GO:0004814">
    <property type="term" value="F:arginine-tRNA ligase activity"/>
    <property type="evidence" value="ECO:0007669"/>
    <property type="project" value="UniProtKB-UniRule"/>
</dbReference>
<dbReference type="GO" id="GO:0005524">
    <property type="term" value="F:ATP binding"/>
    <property type="evidence" value="ECO:0007669"/>
    <property type="project" value="UniProtKB-UniRule"/>
</dbReference>
<dbReference type="GO" id="GO:0006420">
    <property type="term" value="P:arginyl-tRNA aminoacylation"/>
    <property type="evidence" value="ECO:0007669"/>
    <property type="project" value="UniProtKB-UniRule"/>
</dbReference>
<dbReference type="CDD" id="cd07956">
    <property type="entry name" value="Anticodon_Ia_Arg"/>
    <property type="match status" value="1"/>
</dbReference>
<dbReference type="CDD" id="cd00671">
    <property type="entry name" value="ArgRS_core"/>
    <property type="match status" value="1"/>
</dbReference>
<dbReference type="FunFam" id="3.40.50.620:FF:000116">
    <property type="entry name" value="Arginine--tRNA ligase"/>
    <property type="match status" value="1"/>
</dbReference>
<dbReference type="Gene3D" id="3.30.1360.70">
    <property type="entry name" value="Arginyl tRNA synthetase N-terminal domain"/>
    <property type="match status" value="1"/>
</dbReference>
<dbReference type="Gene3D" id="3.40.50.620">
    <property type="entry name" value="HUPs"/>
    <property type="match status" value="1"/>
</dbReference>
<dbReference type="Gene3D" id="1.10.730.10">
    <property type="entry name" value="Isoleucyl-tRNA Synthetase, Domain 1"/>
    <property type="match status" value="1"/>
</dbReference>
<dbReference type="HAMAP" id="MF_00123">
    <property type="entry name" value="Arg_tRNA_synth"/>
    <property type="match status" value="1"/>
</dbReference>
<dbReference type="InterPro" id="IPR001278">
    <property type="entry name" value="Arg-tRNA-ligase"/>
</dbReference>
<dbReference type="InterPro" id="IPR005148">
    <property type="entry name" value="Arg-tRNA-synth_N"/>
</dbReference>
<dbReference type="InterPro" id="IPR036695">
    <property type="entry name" value="Arg-tRNA-synth_N_sf"/>
</dbReference>
<dbReference type="InterPro" id="IPR035684">
    <property type="entry name" value="ArgRS_core"/>
</dbReference>
<dbReference type="InterPro" id="IPR008909">
    <property type="entry name" value="DALR_anticod-bd"/>
</dbReference>
<dbReference type="InterPro" id="IPR014729">
    <property type="entry name" value="Rossmann-like_a/b/a_fold"/>
</dbReference>
<dbReference type="InterPro" id="IPR009080">
    <property type="entry name" value="tRNAsynth_Ia_anticodon-bd"/>
</dbReference>
<dbReference type="NCBIfam" id="TIGR00456">
    <property type="entry name" value="argS"/>
    <property type="match status" value="1"/>
</dbReference>
<dbReference type="PANTHER" id="PTHR11956:SF5">
    <property type="entry name" value="ARGININE--TRNA LIGASE, CYTOPLASMIC"/>
    <property type="match status" value="1"/>
</dbReference>
<dbReference type="PANTHER" id="PTHR11956">
    <property type="entry name" value="ARGINYL-TRNA SYNTHETASE"/>
    <property type="match status" value="1"/>
</dbReference>
<dbReference type="Pfam" id="PF03485">
    <property type="entry name" value="Arg_tRNA_synt_N"/>
    <property type="match status" value="1"/>
</dbReference>
<dbReference type="Pfam" id="PF05746">
    <property type="entry name" value="DALR_1"/>
    <property type="match status" value="1"/>
</dbReference>
<dbReference type="Pfam" id="PF00750">
    <property type="entry name" value="tRNA-synt_1d"/>
    <property type="match status" value="1"/>
</dbReference>
<dbReference type="PRINTS" id="PR01038">
    <property type="entry name" value="TRNASYNTHARG"/>
</dbReference>
<dbReference type="SMART" id="SM01016">
    <property type="entry name" value="Arg_tRNA_synt_N"/>
    <property type="match status" value="1"/>
</dbReference>
<dbReference type="SMART" id="SM00836">
    <property type="entry name" value="DALR_1"/>
    <property type="match status" value="1"/>
</dbReference>
<dbReference type="SUPFAM" id="SSF47323">
    <property type="entry name" value="Anticodon-binding domain of a subclass of class I aminoacyl-tRNA synthetases"/>
    <property type="match status" value="1"/>
</dbReference>
<dbReference type="SUPFAM" id="SSF55190">
    <property type="entry name" value="Arginyl-tRNA synthetase (ArgRS), N-terminal 'additional' domain"/>
    <property type="match status" value="1"/>
</dbReference>
<dbReference type="SUPFAM" id="SSF52374">
    <property type="entry name" value="Nucleotidylyl transferase"/>
    <property type="match status" value="1"/>
</dbReference>
<reference key="1">
    <citation type="journal article" date="2008" name="DNA Res.">
        <title>Comparative genome analysis of Lactobacillus reuteri and Lactobacillus fermentum reveal a genomic island for reuterin and cobalamin production.</title>
        <authorList>
            <person name="Morita H."/>
            <person name="Toh H."/>
            <person name="Fukuda S."/>
            <person name="Horikawa H."/>
            <person name="Oshima K."/>
            <person name="Suzuki T."/>
            <person name="Murakami M."/>
            <person name="Hisamatsu S."/>
            <person name="Kato Y."/>
            <person name="Takizawa T."/>
            <person name="Fukuoka H."/>
            <person name="Yoshimura T."/>
            <person name="Itoh K."/>
            <person name="O'Sullivan D.J."/>
            <person name="McKay L.L."/>
            <person name="Ohno H."/>
            <person name="Kikuchi J."/>
            <person name="Masaoka T."/>
            <person name="Hattori M."/>
        </authorList>
    </citation>
    <scope>NUCLEOTIDE SEQUENCE [LARGE SCALE GENOMIC DNA]</scope>
    <source>
        <strain>JCM 1112</strain>
    </source>
</reference>
<feature type="chain" id="PRO_1000095376" description="Arginine--tRNA ligase">
    <location>
        <begin position="1"/>
        <end position="562"/>
    </location>
</feature>
<feature type="short sequence motif" description="'HIGH' region">
    <location>
        <begin position="121"/>
        <end position="131"/>
    </location>
</feature>
<proteinExistence type="inferred from homology"/>
<protein>
    <recommendedName>
        <fullName evidence="1">Arginine--tRNA ligase</fullName>
        <ecNumber evidence="1">6.1.1.19</ecNumber>
    </recommendedName>
    <alternativeName>
        <fullName evidence="1">Arginyl-tRNA synthetase</fullName>
        <shortName evidence="1">ArgRS</shortName>
    </alternativeName>
</protein>
<keyword id="KW-0030">Aminoacyl-tRNA synthetase</keyword>
<keyword id="KW-0067">ATP-binding</keyword>
<keyword id="KW-0963">Cytoplasm</keyword>
<keyword id="KW-0436">Ligase</keyword>
<keyword id="KW-0547">Nucleotide-binding</keyword>
<keyword id="KW-0648">Protein biosynthesis</keyword>
<evidence type="ECO:0000255" key="1">
    <source>
        <dbReference type="HAMAP-Rule" id="MF_00123"/>
    </source>
</evidence>
<comment type="catalytic activity">
    <reaction evidence="1">
        <text>tRNA(Arg) + L-arginine + ATP = L-arginyl-tRNA(Arg) + AMP + diphosphate</text>
        <dbReference type="Rhea" id="RHEA:20301"/>
        <dbReference type="Rhea" id="RHEA-COMP:9658"/>
        <dbReference type="Rhea" id="RHEA-COMP:9673"/>
        <dbReference type="ChEBI" id="CHEBI:30616"/>
        <dbReference type="ChEBI" id="CHEBI:32682"/>
        <dbReference type="ChEBI" id="CHEBI:33019"/>
        <dbReference type="ChEBI" id="CHEBI:78442"/>
        <dbReference type="ChEBI" id="CHEBI:78513"/>
        <dbReference type="ChEBI" id="CHEBI:456215"/>
        <dbReference type="EC" id="6.1.1.19"/>
    </reaction>
</comment>
<comment type="subunit">
    <text evidence="1">Monomer.</text>
</comment>
<comment type="subcellular location">
    <subcellularLocation>
        <location evidence="1">Cytoplasm</location>
    </subcellularLocation>
</comment>
<comment type="similarity">
    <text evidence="1">Belongs to the class-I aminoacyl-tRNA synthetase family.</text>
</comment>